<evidence type="ECO:0000255" key="1">
    <source>
        <dbReference type="HAMAP-Rule" id="MF_01039"/>
    </source>
</evidence>
<name>GPMA_STAS1</name>
<accession>Q49ZZ2</accession>
<keyword id="KW-0312">Gluconeogenesis</keyword>
<keyword id="KW-0324">Glycolysis</keyword>
<keyword id="KW-0413">Isomerase</keyword>
<keyword id="KW-1185">Reference proteome</keyword>
<reference key="1">
    <citation type="journal article" date="2005" name="Proc. Natl. Acad. Sci. U.S.A.">
        <title>Whole genome sequence of Staphylococcus saprophyticus reveals the pathogenesis of uncomplicated urinary tract infection.</title>
        <authorList>
            <person name="Kuroda M."/>
            <person name="Yamashita A."/>
            <person name="Hirakawa H."/>
            <person name="Kumano M."/>
            <person name="Morikawa K."/>
            <person name="Higashide M."/>
            <person name="Maruyama A."/>
            <person name="Inose Y."/>
            <person name="Matoba K."/>
            <person name="Toh H."/>
            <person name="Kuhara S."/>
            <person name="Hattori M."/>
            <person name="Ohta T."/>
        </authorList>
    </citation>
    <scope>NUCLEOTIDE SEQUENCE [LARGE SCALE GENOMIC DNA]</scope>
    <source>
        <strain>ATCC 15305 / DSM 20229 / NCIMB 8711 / NCTC 7292 / S-41</strain>
    </source>
</reference>
<protein>
    <recommendedName>
        <fullName evidence="1">2,3-bisphosphoglycerate-dependent phosphoglycerate mutase</fullName>
        <shortName evidence="1">BPG-dependent PGAM</shortName>
        <shortName evidence="1">PGAM</shortName>
        <shortName evidence="1">Phosphoglyceromutase</shortName>
        <shortName evidence="1">dPGM</shortName>
        <ecNumber evidence="1">5.4.2.11</ecNumber>
    </recommendedName>
</protein>
<proteinExistence type="inferred from homology"/>
<organism>
    <name type="scientific">Staphylococcus saprophyticus subsp. saprophyticus (strain ATCC 15305 / DSM 20229 / NCIMB 8711 / NCTC 7292 / S-41)</name>
    <dbReference type="NCBI Taxonomy" id="342451"/>
    <lineage>
        <taxon>Bacteria</taxon>
        <taxon>Bacillati</taxon>
        <taxon>Bacillota</taxon>
        <taxon>Bacilli</taxon>
        <taxon>Bacillales</taxon>
        <taxon>Staphylococcaceae</taxon>
        <taxon>Staphylococcus</taxon>
    </lineage>
</organism>
<gene>
    <name evidence="1" type="primary">gpmA</name>
    <name type="ordered locus">SSP0483</name>
</gene>
<comment type="function">
    <text evidence="1">Catalyzes the interconversion of 2-phosphoglycerate and 3-phosphoglycerate.</text>
</comment>
<comment type="catalytic activity">
    <reaction evidence="1">
        <text>(2R)-2-phosphoglycerate = (2R)-3-phosphoglycerate</text>
        <dbReference type="Rhea" id="RHEA:15901"/>
        <dbReference type="ChEBI" id="CHEBI:58272"/>
        <dbReference type="ChEBI" id="CHEBI:58289"/>
        <dbReference type="EC" id="5.4.2.11"/>
    </reaction>
</comment>
<comment type="pathway">
    <text evidence="1">Carbohydrate degradation; glycolysis; pyruvate from D-glyceraldehyde 3-phosphate: step 3/5.</text>
</comment>
<comment type="similarity">
    <text evidence="1">Belongs to the phosphoglycerate mutase family. BPG-dependent PGAM subfamily.</text>
</comment>
<dbReference type="EC" id="5.4.2.11" evidence="1"/>
<dbReference type="EMBL" id="AP008934">
    <property type="protein sequence ID" value="BAE17628.1"/>
    <property type="molecule type" value="Genomic_DNA"/>
</dbReference>
<dbReference type="RefSeq" id="WP_011302441.1">
    <property type="nucleotide sequence ID" value="NZ_MTGA01000036.1"/>
</dbReference>
<dbReference type="SMR" id="Q49ZZ2"/>
<dbReference type="GeneID" id="3616231"/>
<dbReference type="KEGG" id="ssp:SSP0483"/>
<dbReference type="PATRIC" id="fig|342451.11.peg.488"/>
<dbReference type="eggNOG" id="COG0588">
    <property type="taxonomic scope" value="Bacteria"/>
</dbReference>
<dbReference type="HOGENOM" id="CLU_033323_1_5_9"/>
<dbReference type="OrthoDB" id="9781415at2"/>
<dbReference type="UniPathway" id="UPA00109">
    <property type="reaction ID" value="UER00186"/>
</dbReference>
<dbReference type="Proteomes" id="UP000006371">
    <property type="component" value="Chromosome"/>
</dbReference>
<dbReference type="GO" id="GO:0004619">
    <property type="term" value="F:phosphoglycerate mutase activity"/>
    <property type="evidence" value="ECO:0007669"/>
    <property type="project" value="UniProtKB-EC"/>
</dbReference>
<dbReference type="GO" id="GO:0006094">
    <property type="term" value="P:gluconeogenesis"/>
    <property type="evidence" value="ECO:0007669"/>
    <property type="project" value="UniProtKB-UniRule"/>
</dbReference>
<dbReference type="GO" id="GO:0006096">
    <property type="term" value="P:glycolytic process"/>
    <property type="evidence" value="ECO:0007669"/>
    <property type="project" value="UniProtKB-UniRule"/>
</dbReference>
<dbReference type="CDD" id="cd07067">
    <property type="entry name" value="HP_PGM_like"/>
    <property type="match status" value="1"/>
</dbReference>
<dbReference type="FunFam" id="3.40.50.1240:FF:000003">
    <property type="entry name" value="2,3-bisphosphoglycerate-dependent phosphoglycerate mutase"/>
    <property type="match status" value="1"/>
</dbReference>
<dbReference type="Gene3D" id="3.40.50.1240">
    <property type="entry name" value="Phosphoglycerate mutase-like"/>
    <property type="match status" value="1"/>
</dbReference>
<dbReference type="HAMAP" id="MF_01039">
    <property type="entry name" value="PGAM_GpmA"/>
    <property type="match status" value="1"/>
</dbReference>
<dbReference type="InterPro" id="IPR013078">
    <property type="entry name" value="His_Pase_superF_clade-1"/>
</dbReference>
<dbReference type="InterPro" id="IPR029033">
    <property type="entry name" value="His_PPase_superfam"/>
</dbReference>
<dbReference type="InterPro" id="IPR001345">
    <property type="entry name" value="PG/BPGM_mutase_AS"/>
</dbReference>
<dbReference type="InterPro" id="IPR005952">
    <property type="entry name" value="Phosphogly_mut1"/>
</dbReference>
<dbReference type="NCBIfam" id="TIGR01258">
    <property type="entry name" value="pgm_1"/>
    <property type="match status" value="1"/>
</dbReference>
<dbReference type="NCBIfam" id="NF010713">
    <property type="entry name" value="PRK14115.1"/>
    <property type="match status" value="1"/>
</dbReference>
<dbReference type="NCBIfam" id="NF010717">
    <property type="entry name" value="PRK14119.1"/>
    <property type="match status" value="1"/>
</dbReference>
<dbReference type="PANTHER" id="PTHR11931">
    <property type="entry name" value="PHOSPHOGLYCERATE MUTASE"/>
    <property type="match status" value="1"/>
</dbReference>
<dbReference type="Pfam" id="PF00300">
    <property type="entry name" value="His_Phos_1"/>
    <property type="match status" value="2"/>
</dbReference>
<dbReference type="PIRSF" id="PIRSF000709">
    <property type="entry name" value="6PFK_2-Ptase"/>
    <property type="match status" value="1"/>
</dbReference>
<dbReference type="SMART" id="SM00855">
    <property type="entry name" value="PGAM"/>
    <property type="match status" value="1"/>
</dbReference>
<dbReference type="SUPFAM" id="SSF53254">
    <property type="entry name" value="Phosphoglycerate mutase-like"/>
    <property type="match status" value="1"/>
</dbReference>
<dbReference type="PROSITE" id="PS00175">
    <property type="entry name" value="PG_MUTASE"/>
    <property type="match status" value="1"/>
</dbReference>
<feature type="chain" id="PRO_0000179919" description="2,3-bisphosphoglycerate-dependent phosphoglycerate mutase">
    <location>
        <begin position="1"/>
        <end position="228"/>
    </location>
</feature>
<feature type="active site" description="Tele-phosphohistidine intermediate" evidence="1">
    <location>
        <position position="9"/>
    </location>
</feature>
<feature type="active site" description="Proton donor/acceptor" evidence="1">
    <location>
        <position position="87"/>
    </location>
</feature>
<feature type="binding site" evidence="1">
    <location>
        <begin position="8"/>
        <end position="15"/>
    </location>
    <ligand>
        <name>substrate</name>
    </ligand>
</feature>
<feature type="binding site" evidence="1">
    <location>
        <begin position="21"/>
        <end position="22"/>
    </location>
    <ligand>
        <name>substrate</name>
    </ligand>
</feature>
<feature type="binding site" evidence="1">
    <location>
        <position position="60"/>
    </location>
    <ligand>
        <name>substrate</name>
    </ligand>
</feature>
<feature type="binding site" evidence="1">
    <location>
        <begin position="87"/>
        <end position="90"/>
    </location>
    <ligand>
        <name>substrate</name>
    </ligand>
</feature>
<feature type="binding site" evidence="1">
    <location>
        <position position="98"/>
    </location>
    <ligand>
        <name>substrate</name>
    </ligand>
</feature>
<feature type="binding site" evidence="1">
    <location>
        <begin position="114"/>
        <end position="115"/>
    </location>
    <ligand>
        <name>substrate</name>
    </ligand>
</feature>
<feature type="binding site" evidence="1">
    <location>
        <begin position="183"/>
        <end position="184"/>
    </location>
    <ligand>
        <name>substrate</name>
    </ligand>
</feature>
<feature type="site" description="Transition state stabilizer" evidence="1">
    <location>
        <position position="182"/>
    </location>
</feature>
<sequence>MPKLILCRHGQSVWNAENLFTGWADVDLSEQGENEAITSGKKLKAQGIEIDIVYTSLLERAIKTTYHLLNESNQLFIPIIKSWRLNERHYGGLQGLNKDDARKKFGEDQVHIWRRSYDVAPPKQDEAQRESYLNDRKYEHLDRRVMPESESLKDTLVRVIPYWNDQISQQLLDGKTVLVSAHGNSLRALIKYLENVSDEDIVGYEIKTGAPLIYELTDDLQVIDKYYL</sequence>